<organism>
    <name type="scientific">Pongo abelii</name>
    <name type="common">Sumatran orangutan</name>
    <name type="synonym">Pongo pygmaeus abelii</name>
    <dbReference type="NCBI Taxonomy" id="9601"/>
    <lineage>
        <taxon>Eukaryota</taxon>
        <taxon>Metazoa</taxon>
        <taxon>Chordata</taxon>
        <taxon>Craniata</taxon>
        <taxon>Vertebrata</taxon>
        <taxon>Euteleostomi</taxon>
        <taxon>Mammalia</taxon>
        <taxon>Eutheria</taxon>
        <taxon>Euarchontoglires</taxon>
        <taxon>Primates</taxon>
        <taxon>Haplorrhini</taxon>
        <taxon>Catarrhini</taxon>
        <taxon>Hominidae</taxon>
        <taxon>Pongo</taxon>
    </lineage>
</organism>
<dbReference type="EMBL" id="CR857508">
    <property type="protein sequence ID" value="CAH89791.1"/>
    <property type="molecule type" value="mRNA"/>
</dbReference>
<dbReference type="RefSeq" id="NP_001124824.1">
    <property type="nucleotide sequence ID" value="NM_001131352.1"/>
</dbReference>
<dbReference type="SMR" id="Q5REL6"/>
<dbReference type="FunCoup" id="Q5REL6">
    <property type="interactions" value="866"/>
</dbReference>
<dbReference type="STRING" id="9601.ENSPPYP00000000669"/>
<dbReference type="Ensembl" id="ENSPPYT00000000695.3">
    <property type="protein sequence ID" value="ENSPPYP00000000669.3"/>
    <property type="gene ID" value="ENSPPYG00000000571.3"/>
</dbReference>
<dbReference type="GeneID" id="100171682"/>
<dbReference type="KEGG" id="pon:100171682"/>
<dbReference type="CTD" id="6258"/>
<dbReference type="eggNOG" id="KOG3575">
    <property type="taxonomic scope" value="Eukaryota"/>
</dbReference>
<dbReference type="GeneTree" id="ENSGT00940000161269"/>
<dbReference type="HOGENOM" id="CLU_007368_5_4_1"/>
<dbReference type="InParanoid" id="Q5REL6"/>
<dbReference type="OMA" id="PNFQQMG"/>
<dbReference type="OrthoDB" id="5873264at2759"/>
<dbReference type="Proteomes" id="UP000001595">
    <property type="component" value="Chromosome 1"/>
</dbReference>
<dbReference type="GO" id="GO:0005737">
    <property type="term" value="C:cytoplasm"/>
    <property type="evidence" value="ECO:0007669"/>
    <property type="project" value="UniProtKB-SubCell"/>
</dbReference>
<dbReference type="GO" id="GO:0005654">
    <property type="term" value="C:nucleoplasm"/>
    <property type="evidence" value="ECO:0007669"/>
    <property type="project" value="UniProtKB-ARBA"/>
</dbReference>
<dbReference type="GO" id="GO:0140693">
    <property type="term" value="F:molecular condensate scaffold activity"/>
    <property type="evidence" value="ECO:0007669"/>
    <property type="project" value="Ensembl"/>
</dbReference>
<dbReference type="GO" id="GO:0003707">
    <property type="term" value="F:nuclear steroid receptor activity"/>
    <property type="evidence" value="ECO:0007669"/>
    <property type="project" value="InterPro"/>
</dbReference>
<dbReference type="GO" id="GO:1990837">
    <property type="term" value="F:sequence-specific double-stranded DNA binding"/>
    <property type="evidence" value="ECO:0007669"/>
    <property type="project" value="Ensembl"/>
</dbReference>
<dbReference type="GO" id="GO:0008270">
    <property type="term" value="F:zinc ion binding"/>
    <property type="evidence" value="ECO:0007669"/>
    <property type="project" value="UniProtKB-KW"/>
</dbReference>
<dbReference type="GO" id="GO:0045944">
    <property type="term" value="P:positive regulation of transcription by RNA polymerase II"/>
    <property type="evidence" value="ECO:0007669"/>
    <property type="project" value="Ensembl"/>
</dbReference>
<dbReference type="GO" id="GO:0048384">
    <property type="term" value="P:retinoic acid receptor signaling pathway"/>
    <property type="evidence" value="ECO:0007669"/>
    <property type="project" value="Ensembl"/>
</dbReference>
<dbReference type="CDD" id="cd06956">
    <property type="entry name" value="NR_DBD_RXR"/>
    <property type="match status" value="1"/>
</dbReference>
<dbReference type="CDD" id="cd06943">
    <property type="entry name" value="NR_LBD_RXR_like"/>
    <property type="match status" value="1"/>
</dbReference>
<dbReference type="FunFam" id="1.10.565.10:FF:000002">
    <property type="entry name" value="Retinoic acid receptor RXR-alpha"/>
    <property type="match status" value="1"/>
</dbReference>
<dbReference type="FunFam" id="3.30.50.10:FF:000005">
    <property type="entry name" value="Retinoic acid receptor RXR-alpha"/>
    <property type="match status" value="1"/>
</dbReference>
<dbReference type="Gene3D" id="3.30.50.10">
    <property type="entry name" value="Erythroid Transcription Factor GATA-1, subunit A"/>
    <property type="match status" value="1"/>
</dbReference>
<dbReference type="Gene3D" id="1.10.565.10">
    <property type="entry name" value="Retinoid X Receptor"/>
    <property type="match status" value="1"/>
</dbReference>
<dbReference type="InterPro" id="IPR035500">
    <property type="entry name" value="NHR-like_dom_sf"/>
</dbReference>
<dbReference type="InterPro" id="IPR021780">
    <property type="entry name" value="Nuc_recep-AF1"/>
</dbReference>
<dbReference type="InterPro" id="IPR000536">
    <property type="entry name" value="Nucl_hrmn_rcpt_lig-bd"/>
</dbReference>
<dbReference type="InterPro" id="IPR050274">
    <property type="entry name" value="Nuclear_hormone_rcpt_NR2"/>
</dbReference>
<dbReference type="InterPro" id="IPR001723">
    <property type="entry name" value="Nuclear_hrmn_rcpt"/>
</dbReference>
<dbReference type="InterPro" id="IPR000003">
    <property type="entry name" value="Retinoid-X_rcpt/HNF4"/>
</dbReference>
<dbReference type="InterPro" id="IPR001628">
    <property type="entry name" value="Znf_hrmn_rcpt"/>
</dbReference>
<dbReference type="InterPro" id="IPR013088">
    <property type="entry name" value="Znf_NHR/GATA"/>
</dbReference>
<dbReference type="PANTHER" id="PTHR24083">
    <property type="entry name" value="NUCLEAR HORMONE RECEPTOR"/>
    <property type="match status" value="1"/>
</dbReference>
<dbReference type="Pfam" id="PF00104">
    <property type="entry name" value="Hormone_recep"/>
    <property type="match status" value="1"/>
</dbReference>
<dbReference type="Pfam" id="PF11825">
    <property type="entry name" value="Nuc_recep-AF1"/>
    <property type="match status" value="1"/>
</dbReference>
<dbReference type="Pfam" id="PF00105">
    <property type="entry name" value="zf-C4"/>
    <property type="match status" value="1"/>
</dbReference>
<dbReference type="PRINTS" id="PR00545">
    <property type="entry name" value="RETINOIDXR"/>
</dbReference>
<dbReference type="PRINTS" id="PR00398">
    <property type="entry name" value="STRDHORMONER"/>
</dbReference>
<dbReference type="PRINTS" id="PR00047">
    <property type="entry name" value="STROIDFINGER"/>
</dbReference>
<dbReference type="SMART" id="SM00430">
    <property type="entry name" value="HOLI"/>
    <property type="match status" value="1"/>
</dbReference>
<dbReference type="SMART" id="SM00399">
    <property type="entry name" value="ZnF_C4"/>
    <property type="match status" value="1"/>
</dbReference>
<dbReference type="SUPFAM" id="SSF57716">
    <property type="entry name" value="Glucocorticoid receptor-like (DNA-binding domain)"/>
    <property type="match status" value="1"/>
</dbReference>
<dbReference type="SUPFAM" id="SSF48508">
    <property type="entry name" value="Nuclear receptor ligand-binding domain"/>
    <property type="match status" value="1"/>
</dbReference>
<dbReference type="PROSITE" id="PS51843">
    <property type="entry name" value="NR_LBD"/>
    <property type="match status" value="1"/>
</dbReference>
<dbReference type="PROSITE" id="PS00031">
    <property type="entry name" value="NUCLEAR_REC_DBD_1"/>
    <property type="match status" value="1"/>
</dbReference>
<dbReference type="PROSITE" id="PS51030">
    <property type="entry name" value="NUCLEAR_REC_DBD_2"/>
    <property type="match status" value="1"/>
</dbReference>
<comment type="function">
    <text evidence="1">Receptor for retinoic acid. Retinoic acid receptors bind as heterodimers to their target response elements in response to their ligands, all-trans or 9-cis retinoic acid, and regulate gene expression in various biological processes. The RAR/RXR heterodimers bind to the retinoic acid response elements (RARE) composed of tandem 5'-AGGTCA-3' sites known as DR1-DR5. The high affinity ligand for RXRs is 9-cis retinoic acid (By similarity).</text>
</comment>
<comment type="subunit">
    <text evidence="2">Homodimer. Heterodimer with a RAR molecule. Binds DNA preferentially as a RAR/RXR heterodimer. Interacts with RARA (By similarity).</text>
</comment>
<comment type="subcellular location">
    <subcellularLocation>
        <location evidence="3">Nucleus</location>
    </subcellularLocation>
    <subcellularLocation>
        <location evidence="2">Cytoplasm</location>
    </subcellularLocation>
</comment>
<comment type="domain">
    <text>Composed of three domains: a modulating N-terminal domain, a DNA-binding domain and a C-terminal ligand-binding domain.</text>
</comment>
<comment type="PTM">
    <text evidence="2">Acetylated by EP300.</text>
</comment>
<comment type="similarity">
    <text evidence="6">Belongs to the nuclear hormone receptor family. NR2 subfamily.</text>
</comment>
<accession>Q5REL6</accession>
<name>RXRG_PONAB</name>
<sequence length="463" mass="50857">MYGNYSHFMKFPAGYGGSPGHTGSTSMSPSAALSTGKPMDSHPSYTDTPVSAPRTLSAVGTPLNALGSPYRVITSAMGPPSGALAAPPGINLVAPPSSQLNVVNSVSSSEDIKPLPGLPGIGNMNYPSTSPGSLVKHICAICGDRSSGKHYGVYSCEGCKGFFKRTIRKDLIYTCRDNKDCLIDKRQRNRCQYCRYQKCLVMGMKREAVQEERQRSRERAESEAECASSGHEDMPVERILEAELAVEPKTESYGDMNMENSTNDPVTNICHAADKQLFTLVEWAKRIPHFSDLTLEDQVILLRAGWNELLIASFSHRSVSVQDGILLATGLHVHRSSAHSAGVGSIFDRVLTELVSKMKDMQMDKSELGCLRAIVLFNPDAKGLSNPSEVETLREKVYATLEAYTKQKYPEQPGRFAKLLLRLPALRSIGLKCLEHLFFFKLIGDTPIDTFLMEMLETPLQIT</sequence>
<gene>
    <name type="primary">RXRG</name>
    <name type="synonym">NR2B3</name>
</gene>
<proteinExistence type="evidence at transcript level"/>
<evidence type="ECO:0000250" key="1"/>
<evidence type="ECO:0000250" key="2">
    <source>
        <dbReference type="UniProtKB" id="P48443"/>
    </source>
</evidence>
<evidence type="ECO:0000255" key="3">
    <source>
        <dbReference type="PROSITE-ProRule" id="PRU00407"/>
    </source>
</evidence>
<evidence type="ECO:0000255" key="4">
    <source>
        <dbReference type="PROSITE-ProRule" id="PRU01189"/>
    </source>
</evidence>
<evidence type="ECO:0000256" key="5">
    <source>
        <dbReference type="SAM" id="MobiDB-lite"/>
    </source>
</evidence>
<evidence type="ECO:0000305" key="6"/>
<feature type="chain" id="PRO_0000317031" description="Retinoic acid receptor RXR-gamma">
    <location>
        <begin position="1"/>
        <end position="463"/>
    </location>
</feature>
<feature type="domain" description="NR LBD" evidence="4">
    <location>
        <begin position="231"/>
        <end position="459"/>
    </location>
</feature>
<feature type="DNA-binding region" description="Nuclear receptor" evidence="3">
    <location>
        <begin position="139"/>
        <end position="204"/>
    </location>
</feature>
<feature type="zinc finger region" description="NR C4-type" evidence="3">
    <location>
        <begin position="139"/>
        <end position="159"/>
    </location>
</feature>
<feature type="zinc finger region" description="NR C4-type" evidence="3">
    <location>
        <begin position="175"/>
        <end position="194"/>
    </location>
</feature>
<feature type="region of interest" description="Modulating" evidence="1">
    <location>
        <begin position="1"/>
        <end position="138"/>
    </location>
</feature>
<feature type="region of interest" description="Disordered" evidence="5">
    <location>
        <begin position="18"/>
        <end position="53"/>
    </location>
</feature>
<feature type="region of interest" description="Hinge">
    <location>
        <begin position="205"/>
        <end position="230"/>
    </location>
</feature>
<feature type="region of interest" description="Disordered" evidence="5">
    <location>
        <begin position="211"/>
        <end position="232"/>
    </location>
</feature>
<feature type="compositionally biased region" description="Polar residues" evidence="5">
    <location>
        <begin position="21"/>
        <end position="33"/>
    </location>
</feature>
<feature type="compositionally biased region" description="Basic and acidic residues" evidence="5">
    <location>
        <begin position="211"/>
        <end position="222"/>
    </location>
</feature>
<reference key="1">
    <citation type="submission" date="2004-11" db="EMBL/GenBank/DDBJ databases">
        <authorList>
            <consortium name="The German cDNA consortium"/>
        </authorList>
    </citation>
    <scope>NUCLEOTIDE SEQUENCE [LARGE SCALE MRNA]</scope>
    <source>
        <tissue>Heart</tissue>
    </source>
</reference>
<keyword id="KW-0963">Cytoplasm</keyword>
<keyword id="KW-0238">DNA-binding</keyword>
<keyword id="KW-0479">Metal-binding</keyword>
<keyword id="KW-0539">Nucleus</keyword>
<keyword id="KW-0675">Receptor</keyword>
<keyword id="KW-1185">Reference proteome</keyword>
<keyword id="KW-0804">Transcription</keyword>
<keyword id="KW-0805">Transcription regulation</keyword>
<keyword id="KW-0862">Zinc</keyword>
<keyword id="KW-0863">Zinc-finger</keyword>
<protein>
    <recommendedName>
        <fullName>Retinoic acid receptor RXR-gamma</fullName>
    </recommendedName>
    <alternativeName>
        <fullName>Nuclear receptor subfamily 2 group B member 3</fullName>
    </alternativeName>
    <alternativeName>
        <fullName>Retinoid X receptor gamma</fullName>
    </alternativeName>
</protein>